<feature type="chain" id="PRO_0000460854" description="Chitin synthase csmA">
    <location>
        <begin position="1"/>
        <end position="1852"/>
    </location>
</feature>
<feature type="transmembrane region" description="Helical" evidence="1">
    <location>
        <begin position="895"/>
        <end position="915"/>
    </location>
</feature>
<feature type="transmembrane region" description="Helical" evidence="1">
    <location>
        <begin position="930"/>
        <end position="950"/>
    </location>
</feature>
<feature type="transmembrane region" description="Helical" evidence="1">
    <location>
        <begin position="1205"/>
        <end position="1225"/>
    </location>
</feature>
<feature type="transmembrane region" description="Helical" evidence="1">
    <location>
        <begin position="1600"/>
        <end position="1620"/>
    </location>
</feature>
<feature type="transmembrane region" description="Helical" evidence="1">
    <location>
        <begin position="1626"/>
        <end position="1646"/>
    </location>
</feature>
<feature type="transmembrane region" description="Helical" evidence="1">
    <location>
        <begin position="1653"/>
        <end position="1673"/>
    </location>
</feature>
<feature type="domain" description="Myosin motor" evidence="4">
    <location>
        <begin position="1"/>
        <end position="787"/>
    </location>
</feature>
<feature type="domain" description="Cytochrome b5 heme-binding" evidence="2">
    <location>
        <begin position="958"/>
        <end position="1017"/>
    </location>
</feature>
<feature type="domain" description="DEK-C" evidence="5">
    <location>
        <begin position="1794"/>
        <end position="1849"/>
    </location>
</feature>
<feature type="region of interest" description="Disordered" evidence="6">
    <location>
        <begin position="1"/>
        <end position="20"/>
    </location>
</feature>
<feature type="region of interest" description="Disordered" evidence="6">
    <location>
        <begin position="599"/>
        <end position="646"/>
    </location>
</feature>
<feature type="region of interest" description="Actin-binding" evidence="4">
    <location>
        <begin position="667"/>
        <end position="691"/>
    </location>
</feature>
<feature type="binding site" evidence="4">
    <location>
        <begin position="102"/>
        <end position="109"/>
    </location>
    <ligand>
        <name>ATP</name>
        <dbReference type="ChEBI" id="CHEBI:30616"/>
    </ligand>
</feature>
<feature type="glycosylation site" description="N-linked (GlcNAc...) asparagine" evidence="3">
    <location>
        <position position="58"/>
    </location>
</feature>
<feature type="glycosylation site" description="N-linked (GlcNAc...) asparagine" evidence="3">
    <location>
        <position position="642"/>
    </location>
</feature>
<feature type="glycosylation site" description="N-linked (GlcNAc...) asparagine" evidence="3">
    <location>
        <position position="840"/>
    </location>
</feature>
<feature type="glycosylation site" description="N-linked (GlcNAc...) asparagine" evidence="3">
    <location>
        <position position="1044"/>
    </location>
</feature>
<feature type="glycosylation site" description="N-linked (GlcNAc...) asparagine" evidence="3">
    <location>
        <position position="1195"/>
    </location>
</feature>
<feature type="glycosylation site" description="N-linked (GlcNAc...) asparagine" evidence="3">
    <location>
        <position position="1428"/>
    </location>
</feature>
<feature type="glycosylation site" description="N-linked (GlcNAc...) asparagine" evidence="3">
    <location>
        <position position="1462"/>
    </location>
</feature>
<feature type="glycosylation site" description="N-linked (GlcNAc...) asparagine" evidence="3">
    <location>
        <position position="1568"/>
    </location>
</feature>
<feature type="mutagenesis site" description="Abolished interactions between the MMD and F-actin and impairs localization at hyphal tips and septation sites." evidence="9">
    <original>RTKTIHRERV</original>
    <variation>AAAAAAAAAA</variation>
    <location>
        <begin position="347"/>
        <end position="356"/>
    </location>
</feature>
<feature type="mutagenesis site" description="Lowers interactions between the MMD and F-actin." evidence="9">
    <original>R</original>
    <variation>A</variation>
    <location>
        <position position="347"/>
    </location>
</feature>
<dbReference type="EC" id="2.4.1.16" evidence="14"/>
<dbReference type="EMBL" id="BN001301">
    <property type="protein sequence ID" value="CBF69713.1"/>
    <property type="molecule type" value="Genomic_DNA"/>
</dbReference>
<dbReference type="RefSeq" id="XP_663922.1">
    <property type="nucleotide sequence ID" value="XM_658830.1"/>
</dbReference>
<dbReference type="SMR" id="G5EB74"/>
<dbReference type="STRING" id="227321.G5EB74"/>
<dbReference type="CAZy" id="GT2">
    <property type="family name" value="Glycosyltransferase Family 2"/>
</dbReference>
<dbReference type="EnsemblFungi" id="CBF69713">
    <property type="protein sequence ID" value="CBF69713"/>
    <property type="gene ID" value="ANIA_06318"/>
</dbReference>
<dbReference type="GeneID" id="2870968"/>
<dbReference type="KEGG" id="ani:ANIA_06318"/>
<dbReference type="VEuPathDB" id="FungiDB:AN6318"/>
<dbReference type="eggNOG" id="KOG2571">
    <property type="taxonomic scope" value="Eukaryota"/>
</dbReference>
<dbReference type="eggNOG" id="KOG4229">
    <property type="taxonomic scope" value="Eukaryota"/>
</dbReference>
<dbReference type="HOGENOM" id="CLU_000192_0_2_1"/>
<dbReference type="InParanoid" id="G5EB74"/>
<dbReference type="OMA" id="LEMHHQI"/>
<dbReference type="OrthoDB" id="370884at2759"/>
<dbReference type="Proteomes" id="UP000000560">
    <property type="component" value="Chromosome I"/>
</dbReference>
<dbReference type="GO" id="GO:0071944">
    <property type="term" value="C:cell periphery"/>
    <property type="evidence" value="ECO:0000318"/>
    <property type="project" value="GO_Central"/>
</dbReference>
<dbReference type="GO" id="GO:0030428">
    <property type="term" value="C:cell septum"/>
    <property type="evidence" value="ECO:0000314"/>
    <property type="project" value="AspGD"/>
</dbReference>
<dbReference type="GO" id="GO:0001411">
    <property type="term" value="C:hyphal tip"/>
    <property type="evidence" value="ECO:0000314"/>
    <property type="project" value="AspGD"/>
</dbReference>
<dbReference type="GO" id="GO:0016459">
    <property type="term" value="C:myosin complex"/>
    <property type="evidence" value="ECO:0007669"/>
    <property type="project" value="UniProtKB-KW"/>
</dbReference>
<dbReference type="GO" id="GO:0005886">
    <property type="term" value="C:plasma membrane"/>
    <property type="evidence" value="ECO:0007669"/>
    <property type="project" value="UniProtKB-SubCell"/>
</dbReference>
<dbReference type="GO" id="GO:0003779">
    <property type="term" value="F:actin binding"/>
    <property type="evidence" value="ECO:0007669"/>
    <property type="project" value="UniProtKB-KW"/>
</dbReference>
<dbReference type="GO" id="GO:0005524">
    <property type="term" value="F:ATP binding"/>
    <property type="evidence" value="ECO:0007669"/>
    <property type="project" value="UniProtKB-KW"/>
</dbReference>
<dbReference type="GO" id="GO:0004100">
    <property type="term" value="F:chitin synthase activity"/>
    <property type="evidence" value="ECO:0000315"/>
    <property type="project" value="AspGD"/>
</dbReference>
<dbReference type="GO" id="GO:0003774">
    <property type="term" value="F:cytoskeletal motor activity"/>
    <property type="evidence" value="ECO:0007669"/>
    <property type="project" value="InterPro"/>
</dbReference>
<dbReference type="GO" id="GO:0009932">
    <property type="term" value="P:cell tip growth"/>
    <property type="evidence" value="ECO:0000315"/>
    <property type="project" value="AspGD"/>
</dbReference>
<dbReference type="GO" id="GO:0071470">
    <property type="term" value="P:cellular response to osmotic stress"/>
    <property type="evidence" value="ECO:0000315"/>
    <property type="project" value="AspGD"/>
</dbReference>
<dbReference type="GO" id="GO:0006031">
    <property type="term" value="P:chitin biosynthetic process"/>
    <property type="evidence" value="ECO:0000315"/>
    <property type="project" value="AspGD"/>
</dbReference>
<dbReference type="GO" id="GO:0048315">
    <property type="term" value="P:conidium formation"/>
    <property type="evidence" value="ECO:0000315"/>
    <property type="project" value="AspGD"/>
</dbReference>
<dbReference type="GO" id="GO:0031505">
    <property type="term" value="P:fungal-type cell wall organization"/>
    <property type="evidence" value="ECO:0000315"/>
    <property type="project" value="AspGD"/>
</dbReference>
<dbReference type="GO" id="GO:0030448">
    <property type="term" value="P:hyphal growth"/>
    <property type="evidence" value="ECO:0000315"/>
    <property type="project" value="AspGD"/>
</dbReference>
<dbReference type="CDD" id="cd14879">
    <property type="entry name" value="MYSc_Myo17"/>
    <property type="match status" value="1"/>
</dbReference>
<dbReference type="FunFam" id="1.10.10.60:FF:000337">
    <property type="entry name" value="Chitin synthase 8"/>
    <property type="match status" value="1"/>
</dbReference>
<dbReference type="FunFam" id="1.10.10.820:FF:000012">
    <property type="entry name" value="Chitin synthase ChsE"/>
    <property type="match status" value="1"/>
</dbReference>
<dbReference type="FunFam" id="1.20.58.530:FF:000017">
    <property type="entry name" value="Chitin synthase ChsE"/>
    <property type="match status" value="1"/>
</dbReference>
<dbReference type="FunFam" id="3.10.120.10:FF:000019">
    <property type="entry name" value="Chitin synthase ChsE"/>
    <property type="match status" value="1"/>
</dbReference>
<dbReference type="FunFam" id="3.40.850.10:FF:000055">
    <property type="entry name" value="Chitin synthase ChsE"/>
    <property type="match status" value="1"/>
</dbReference>
<dbReference type="Gene3D" id="1.10.10.820">
    <property type="match status" value="1"/>
</dbReference>
<dbReference type="Gene3D" id="1.20.58.530">
    <property type="match status" value="1"/>
</dbReference>
<dbReference type="Gene3D" id="3.10.120.10">
    <property type="entry name" value="Cytochrome b5-like heme/steroid binding domain"/>
    <property type="match status" value="1"/>
</dbReference>
<dbReference type="Gene3D" id="1.10.10.60">
    <property type="entry name" value="Homeodomain-like"/>
    <property type="match status" value="1"/>
</dbReference>
<dbReference type="Gene3D" id="3.40.850.10">
    <property type="entry name" value="Kinesin motor domain"/>
    <property type="match status" value="1"/>
</dbReference>
<dbReference type="Gene3D" id="1.20.120.720">
    <property type="entry name" value="Myosin VI head, motor domain, U50 subdomain"/>
    <property type="match status" value="1"/>
</dbReference>
<dbReference type="InterPro" id="IPR004835">
    <property type="entry name" value="Chitin_synth"/>
</dbReference>
<dbReference type="InterPro" id="IPR001199">
    <property type="entry name" value="Cyt_B5-like_heme/steroid-bd"/>
</dbReference>
<dbReference type="InterPro" id="IPR036400">
    <property type="entry name" value="Cyt_B5-like_heme/steroid_sf"/>
</dbReference>
<dbReference type="InterPro" id="IPR014876">
    <property type="entry name" value="DEK_C"/>
</dbReference>
<dbReference type="InterPro" id="IPR036961">
    <property type="entry name" value="Kinesin_motor_dom_sf"/>
</dbReference>
<dbReference type="InterPro" id="IPR001609">
    <property type="entry name" value="Myosin_head_motor_dom-like"/>
</dbReference>
<dbReference type="InterPro" id="IPR036037">
    <property type="entry name" value="MYSc_Myo17"/>
</dbReference>
<dbReference type="InterPro" id="IPR029044">
    <property type="entry name" value="Nucleotide-diphossugar_trans"/>
</dbReference>
<dbReference type="InterPro" id="IPR027417">
    <property type="entry name" value="P-loop_NTPase"/>
</dbReference>
<dbReference type="PANTHER" id="PTHR22914">
    <property type="entry name" value="CHITIN SYNTHASE"/>
    <property type="match status" value="1"/>
</dbReference>
<dbReference type="PANTHER" id="PTHR22914:SF45">
    <property type="entry name" value="CHITIN SYNTHASE"/>
    <property type="match status" value="1"/>
</dbReference>
<dbReference type="Pfam" id="PF03142">
    <property type="entry name" value="Chitin_synth_2"/>
    <property type="match status" value="1"/>
</dbReference>
<dbReference type="Pfam" id="PF00173">
    <property type="entry name" value="Cyt-b5"/>
    <property type="match status" value="1"/>
</dbReference>
<dbReference type="Pfam" id="PF08766">
    <property type="entry name" value="DEK_C"/>
    <property type="match status" value="1"/>
</dbReference>
<dbReference type="Pfam" id="PF00063">
    <property type="entry name" value="Myosin_head"/>
    <property type="match status" value="1"/>
</dbReference>
<dbReference type="SMART" id="SM01117">
    <property type="entry name" value="Cyt-b5"/>
    <property type="match status" value="2"/>
</dbReference>
<dbReference type="SMART" id="SM00242">
    <property type="entry name" value="MYSc"/>
    <property type="match status" value="1"/>
</dbReference>
<dbReference type="SUPFAM" id="SSF55856">
    <property type="entry name" value="Cytochrome b5-like heme/steroid binding domain"/>
    <property type="match status" value="1"/>
</dbReference>
<dbReference type="SUPFAM" id="SSF109715">
    <property type="entry name" value="DEK C-terminal domain"/>
    <property type="match status" value="1"/>
</dbReference>
<dbReference type="SUPFAM" id="SSF53448">
    <property type="entry name" value="Nucleotide-diphospho-sugar transferases"/>
    <property type="match status" value="1"/>
</dbReference>
<dbReference type="SUPFAM" id="SSF52540">
    <property type="entry name" value="P-loop containing nucleoside triphosphate hydrolases"/>
    <property type="match status" value="1"/>
</dbReference>
<dbReference type="PROSITE" id="PS50255">
    <property type="entry name" value="CYTOCHROME_B5_2"/>
    <property type="match status" value="1"/>
</dbReference>
<dbReference type="PROSITE" id="PS51998">
    <property type="entry name" value="DEK_C"/>
    <property type="match status" value="1"/>
</dbReference>
<dbReference type="PROSITE" id="PS51456">
    <property type="entry name" value="MYOSIN_MOTOR"/>
    <property type="match status" value="1"/>
</dbReference>
<gene>
    <name evidence="12" type="primary">csmA</name>
    <name type="ORF">ANIA_06318</name>
</gene>
<keyword id="KW-0009">Actin-binding</keyword>
<keyword id="KW-0067">ATP-binding</keyword>
<keyword id="KW-1003">Cell membrane</keyword>
<keyword id="KW-0325">Glycoprotein</keyword>
<keyword id="KW-0328">Glycosyltransferase</keyword>
<keyword id="KW-0472">Membrane</keyword>
<keyword id="KW-0505">Motor protein</keyword>
<keyword id="KW-0518">Myosin</keyword>
<keyword id="KW-0547">Nucleotide-binding</keyword>
<keyword id="KW-1185">Reference proteome</keyword>
<keyword id="KW-0808">Transferase</keyword>
<keyword id="KW-0812">Transmembrane</keyword>
<keyword id="KW-1133">Transmembrane helix</keyword>
<proteinExistence type="evidence at protein level"/>
<accession>G5EB74</accession>
<accession>C8V172</accession>
<name>CHS5_EMENI</name>
<sequence length="1852" mass="206027">MVGTLPAGHTPSHVQSSLPSLPAHLQSDTHLTAHLASRFHVGLPTARLSSHALISLNNYTSSSKGPDGGKEGSAMGETEDLARRAYTRLGARGENQAIVFLGESGAGKTTLRSHLLSSFLSFSSTPLSSKLSYAAFIFDTLTTTKSLTTPTASKAGLFLELQYDASSSVNPTLIGGKIIDHRLERSRIASVPTGERSFHVLYYLLAGTSAAEKAHLGLDSPIHVTTAGGRLSSADHKRWRYLGHPTQLKVGINDADGFQHFKTALRKLEFPRSEIAEICQILAAILHIGQLDFGSGQATLTGAEESGGYSHEGGETVTVVKNKDVLSIIAAFLGLGVGELEASFGYRTKTIHRERVTVMLDPKGARRSADELSRVLYSLLVAYVIENVNQRICAAEDSVANTVSIIDFPGFAQACSTGSTLDQLLNNAACESLYNFCLRSFFDRKADMLEREEVAVPATSYFDNTDAVRGLLKQGNGLLSILDDQTRRGRTDAQFVEAVRRRFENKNPAITAGASGSGNGYGMVSQNARSSFTVKHFAGEVDYSATGLLEENGEVISGDLMNLMKSTRSDFVRELFGQEALQTVAHPKEKTAIMQAQVSSKPLRMPSMARRKTSPASRLTFDATPAEDPYETESQTGSSAKNSSAKRKSGMLMGGMQCAAGQFLSSLDIVNKCLTSGNLNPYFVFCLKPNDRRIANQFDSKCVRTQIQTLGIAEISQRLRNADFSVFLPFAEFLGLAEVGNVVVGSDKEKSEVVLDEKRWPGNEARVGSTGVFLSERCWADLAKVGERVIPSFAAEDDGGDALLHPRTANYADSKVRLLNPSDHSPGAYIYGDESKQASNTSRDFDGRSDAGYSAFNSGDMFHNLETREQMLEKGNEKQMEEVDEVPVSGSRKRWMAIVWLLTFYIPTPAIRYIGRMKRKDIQIAWREKFAINLLIWLACAIAVFIIVGFPSLICPTQHVYSPAELSSHDGKDGHSSYTSIRGLVLDLGEFMDSHYPGIVPDSALKKYAGVDSTALFPVQVSALCLGKDGNVDPKVLLDYKPTNFSGSVTSTSSGDPNSVYHDFRYFRDDYRPDWYAEQMIYLRANYYKGWIGYSSEYLHTLASKSQNVASINGKIYDLTSYIAGGRRIQGREGDDTTGIDTDFMDSLVVDLFQQKAGEDITKYWEDLPLTPKLRVDMMDCLNNLFIVGHVDTRNSTQCQFARYFILAISVLICSVIVFKFFAALQFGKKNVPENLDKFIICQVPAYTEDEESLRRAIDSMARMQYDDKRKLLVVICDGMIIGQGNDRPTPRIVLDILGVPESVDPEPLSFESLGEGMKQHNMGKVYSGLYEVQGHIVPFLVVVKVGKPSEVSRPGNRGKRDSQMVLMRFLNRVHYNLPMSPMELEMHHHIRNIIGVNPTFYEFILQVDADTVVAPDAATRMVSSCLNDTRIIGVCGETSLTNAKTSAVTMIQVYEYYISHNLTKAFESLFGSITCLPGCFTMYRIRSAESGKPLFVSKEIVEAYSEIRVDTLHMKNLLHLGEDRYLTTLLLKHHPKFKTKYNFRAQAYTIAPESWTVFLSQRRRWINSTVHNLVELIPLQQLCGFCCFSMRFVVFIDLISTIIMPVTVAYIVYLIVWLVRDTSTIPWTSFLLLAAIYGLQAIIFIVRRKWEMIGWMIIYILAIPVYSLALPLYSFWHMDDFSWGNTRIITGEKGRKIVISDEGKFDPASIPKKRWEEYQAELWEAQTSRDDRSEISGISYGTKYHPATQSEYGFPGSRPMSQLELPRHMSRMSLAPSEMMSRHMDMELEDVNLPSDDAILSEIRDILRTADLMTVTKKNIKQELERRFGVNLDAKRPYINSATEAVLSGNL</sequence>
<reference key="1">
    <citation type="journal article" date="2005" name="Nature">
        <title>Sequencing of Aspergillus nidulans and comparative analysis with A. fumigatus and A. oryzae.</title>
        <authorList>
            <person name="Galagan J.E."/>
            <person name="Calvo S.E."/>
            <person name="Cuomo C."/>
            <person name="Ma L.-J."/>
            <person name="Wortman J.R."/>
            <person name="Batzoglou S."/>
            <person name="Lee S.-I."/>
            <person name="Bastuerkmen M."/>
            <person name="Spevak C.C."/>
            <person name="Clutterbuck J."/>
            <person name="Kapitonov V."/>
            <person name="Jurka J."/>
            <person name="Scazzocchio C."/>
            <person name="Farman M.L."/>
            <person name="Butler J."/>
            <person name="Purcell S."/>
            <person name="Harris S."/>
            <person name="Braus G.H."/>
            <person name="Draht O."/>
            <person name="Busch S."/>
            <person name="D'Enfert C."/>
            <person name="Bouchier C."/>
            <person name="Goldman G.H."/>
            <person name="Bell-Pedersen D."/>
            <person name="Griffiths-Jones S."/>
            <person name="Doonan J.H."/>
            <person name="Yu J."/>
            <person name="Vienken K."/>
            <person name="Pain A."/>
            <person name="Freitag M."/>
            <person name="Selker E.U."/>
            <person name="Archer D.B."/>
            <person name="Penalva M.A."/>
            <person name="Oakley B.R."/>
            <person name="Momany M."/>
            <person name="Tanaka T."/>
            <person name="Kumagai T."/>
            <person name="Asai K."/>
            <person name="Machida M."/>
            <person name="Nierman W.C."/>
            <person name="Denning D.W."/>
            <person name="Caddick M.X."/>
            <person name="Hynes M."/>
            <person name="Paoletti M."/>
            <person name="Fischer R."/>
            <person name="Miller B.L."/>
            <person name="Dyer P.S."/>
            <person name="Sachs M.S."/>
            <person name="Osmani S.A."/>
            <person name="Birren B.W."/>
        </authorList>
    </citation>
    <scope>NUCLEOTIDE SEQUENCE [LARGE SCALE GENOMIC DNA]</scope>
    <source>
        <strain>FGSC A4 / ATCC 38163 / CBS 112.46 / NRRL 194 / M139</strain>
    </source>
</reference>
<reference key="2">
    <citation type="journal article" date="2009" name="Fungal Genet. Biol.">
        <title>The 2008 update of the Aspergillus nidulans genome annotation: a community effort.</title>
        <authorList>
            <person name="Wortman J.R."/>
            <person name="Gilsenan J.M."/>
            <person name="Joardar V."/>
            <person name="Deegan J."/>
            <person name="Clutterbuck J."/>
            <person name="Andersen M.R."/>
            <person name="Archer D."/>
            <person name="Bencina M."/>
            <person name="Braus G."/>
            <person name="Coutinho P."/>
            <person name="von Dohren H."/>
            <person name="Doonan J."/>
            <person name="Driessen A.J."/>
            <person name="Durek P."/>
            <person name="Espeso E."/>
            <person name="Fekete E."/>
            <person name="Flipphi M."/>
            <person name="Estrada C.G."/>
            <person name="Geysens S."/>
            <person name="Goldman G."/>
            <person name="de Groot P.W."/>
            <person name="Hansen K."/>
            <person name="Harris S.D."/>
            <person name="Heinekamp T."/>
            <person name="Helmstaedt K."/>
            <person name="Henrissat B."/>
            <person name="Hofmann G."/>
            <person name="Homan T."/>
            <person name="Horio T."/>
            <person name="Horiuchi H."/>
            <person name="James S."/>
            <person name="Jones M."/>
            <person name="Karaffa L."/>
            <person name="Karanyi Z."/>
            <person name="Kato M."/>
            <person name="Keller N."/>
            <person name="Kelly D.E."/>
            <person name="Kiel J.A."/>
            <person name="Kim J.M."/>
            <person name="van der Klei I.J."/>
            <person name="Klis F.M."/>
            <person name="Kovalchuk A."/>
            <person name="Krasevec N."/>
            <person name="Kubicek C.P."/>
            <person name="Liu B."/>
            <person name="Maccabe A."/>
            <person name="Meyer V."/>
            <person name="Mirabito P."/>
            <person name="Miskei M."/>
            <person name="Mos M."/>
            <person name="Mullins J."/>
            <person name="Nelson D.R."/>
            <person name="Nielsen J."/>
            <person name="Oakley B.R."/>
            <person name="Osmani S.A."/>
            <person name="Pakula T."/>
            <person name="Paszewski A."/>
            <person name="Paulsen I."/>
            <person name="Pilsyk S."/>
            <person name="Pocsi I."/>
            <person name="Punt P.J."/>
            <person name="Ram A.F."/>
            <person name="Ren Q."/>
            <person name="Robellet X."/>
            <person name="Robson G."/>
            <person name="Seiboth B."/>
            <person name="van Solingen P."/>
            <person name="Specht T."/>
            <person name="Sun J."/>
            <person name="Taheri-Talesh N."/>
            <person name="Takeshita N."/>
            <person name="Ussery D."/>
            <person name="vanKuyk P.A."/>
            <person name="Visser H."/>
            <person name="van de Vondervoort P.J."/>
            <person name="de Vries R.P."/>
            <person name="Walton J."/>
            <person name="Xiang X."/>
            <person name="Xiong Y."/>
            <person name="Zeng A.P."/>
            <person name="Brandt B.W."/>
            <person name="Cornell M.J."/>
            <person name="van den Hondel C.A."/>
            <person name="Visser J."/>
            <person name="Oliver S.G."/>
            <person name="Turner G."/>
        </authorList>
    </citation>
    <scope>GENOME REANNOTATION</scope>
    <source>
        <strain>FGSC A4 / ATCC 38163 / CBS 112.46 / NRRL 194 / M139</strain>
    </source>
</reference>
<reference key="3">
    <citation type="journal article" date="1997" name="Biochem. Biophys. Res. Commun.">
        <title>A novel fungal gene encoding chitin synthase with a myosin motor-like domain.</title>
        <authorList>
            <person name="Fujiwara M."/>
            <person name="Horiuchi H."/>
            <person name="Ohta A."/>
            <person name="Takagi M."/>
        </authorList>
    </citation>
    <scope>DOMAIN</scope>
</reference>
<reference key="4">
    <citation type="journal article" date="1999" name="J. Bacteriol.">
        <title>Proliferation of intrahyphal hyphae caused by disruption of csmA, which encodes a class V chitin synthase with a myosin motor-like domain in Aspergillus nidulans.</title>
        <authorList>
            <person name="Horiuchi H."/>
            <person name="Fujiwara M."/>
            <person name="Yamashita S."/>
            <person name="Ohta A."/>
            <person name="Takagi M."/>
        </authorList>
    </citation>
    <scope>FUNCTION</scope>
    <scope>DISRUPTION PHENOTYPE</scope>
    <scope>DOMAIN</scope>
</reference>
<reference key="5">
    <citation type="journal article" date="2002" name="Biochem. Biophys. Res. Commun.">
        <title>csmA, a gene encoding a class V chitin synthase with a myosin motor-like domain of Aspergillus nidulans, is translated as a single polypeptide and regulated in response to osmotic conditions.</title>
        <authorList>
            <person name="Takeshita N."/>
            <person name="Ohta A."/>
            <person name="Horiuchi H."/>
        </authorList>
    </citation>
    <scope>INDUCTION</scope>
    <scope>FUNCTION</scope>
</reference>
<reference key="6">
    <citation type="journal article" date="2005" name="Mol. Biol. Cell">
        <title>CsmA, a class V chitin synthase with a myosin motor-like domain, is localized through direct interaction with the actin cytoskeleton in Aspergillus nidulans.</title>
        <authorList>
            <person name="Takeshita N."/>
            <person name="Ohta A."/>
            <person name="Horiuchi H."/>
        </authorList>
    </citation>
    <scope>DOMAIN</scope>
    <scope>SUBCELLULAR LOCATION</scope>
    <scope>FUNCTION</scope>
    <scope>INTERACTION WITH F-ACTIN</scope>
    <scope>MUTAGENESIS OF ARG-347 AND 347-ARG--VAL-356</scope>
</reference>
<reference key="7">
    <citation type="journal article" date="2006" name="Mol. Microbiol.">
        <title>Aspergillus nidulans class V and VI chitin synthases CsmA and CsmB, each with a myosin motor-like domain, perform compensatory functions that are essential for hyphal tip growth.</title>
        <authorList>
            <person name="Takeshita N."/>
            <person name="Yamashita S."/>
            <person name="Ohta A."/>
            <person name="Horiuchi H."/>
        </authorList>
    </citation>
    <scope>FUNCTION</scope>
</reference>
<reference key="8">
    <citation type="journal article" date="2015" name="PLoS ONE">
        <title>Transportation of Aspergillus nidulans Class III and V Chitin Synthases to the Hyphal Tips Depends on Conventional Kinesin.</title>
        <authorList>
            <person name="Takeshita N."/>
            <person name="Wernet V."/>
            <person name="Tsuizaki M."/>
            <person name="Gruen N."/>
            <person name="Hoshi H.O."/>
            <person name="Ohta A."/>
            <person name="Fischer R."/>
            <person name="Horiuchi H."/>
        </authorList>
    </citation>
    <scope>SUBCELLULAR LOCATION</scope>
    <scope>INTERACTION WITH KINA</scope>
</reference>
<organism>
    <name type="scientific">Emericella nidulans (strain FGSC A4 / ATCC 38163 / CBS 112.46 / NRRL 194 / M139)</name>
    <name type="common">Aspergillus nidulans</name>
    <dbReference type="NCBI Taxonomy" id="227321"/>
    <lineage>
        <taxon>Eukaryota</taxon>
        <taxon>Fungi</taxon>
        <taxon>Dikarya</taxon>
        <taxon>Ascomycota</taxon>
        <taxon>Pezizomycotina</taxon>
        <taxon>Eurotiomycetes</taxon>
        <taxon>Eurotiomycetidae</taxon>
        <taxon>Eurotiales</taxon>
        <taxon>Aspergillaceae</taxon>
        <taxon>Aspergillus</taxon>
        <taxon>Aspergillus subgen. Nidulantes</taxon>
    </lineage>
</organism>
<comment type="function">
    <text evidence="7 8 9 10 14">Polymerizes chitin, a structural polymer of the cell wall and septum, by transferring the sugar moiety of UDP-GlcNAc to the non-reducing end of the growing chitin polymer (Probable). Plays an important role in polarized hyphal cell wall synthesis and maintenance of cell wall integrity (PubMed:10368147, PubMed:15703213, PubMed:16468983). Its role in growth and morphogenesis is particularly important under low osmotic conditions (PubMed:12379226).</text>
</comment>
<comment type="catalytic activity">
    <reaction evidence="14">
        <text>[(1-&gt;4)-N-acetyl-beta-D-glucosaminyl](n) + UDP-N-acetyl-alpha-D-glucosamine = [(1-&gt;4)-N-acetyl-beta-D-glucosaminyl](n+1) + UDP + H(+)</text>
        <dbReference type="Rhea" id="RHEA:16637"/>
        <dbReference type="Rhea" id="RHEA-COMP:9593"/>
        <dbReference type="Rhea" id="RHEA-COMP:9595"/>
        <dbReference type="ChEBI" id="CHEBI:15378"/>
        <dbReference type="ChEBI" id="CHEBI:17029"/>
        <dbReference type="ChEBI" id="CHEBI:57705"/>
        <dbReference type="ChEBI" id="CHEBI:58223"/>
        <dbReference type="EC" id="2.4.1.16"/>
    </reaction>
    <physiologicalReaction direction="left-to-right" evidence="14">
        <dbReference type="Rhea" id="RHEA:16638"/>
    </physiologicalReaction>
</comment>
<comment type="subunit">
    <text evidence="9 11">Binds F-actin via its N-terminal myosin motor-like domain (MMD) (PubMed:15703213). Interacts with kibesin kinA (PubMed:25955346).</text>
</comment>
<comment type="subcellular location">
    <subcellularLocation>
        <location evidence="9 11">Cell membrane</location>
        <topology evidence="1">Multi-pass membrane protein</topology>
    </subcellularLocation>
    <subcellularLocation>
        <location evidence="9 11">Cell septum</location>
    </subcellularLocation>
    <subcellularLocation>
        <location evidence="9 11">Cell tip</location>
    </subcellularLocation>
    <text evidence="9">Localization to the hyphal tips depends on conventional kinesin kinA (PubMed:15703213). Concentrates at the hyphal tips and septation sites near actin structures, which is dependent on the actin-binding ability of the N-terminal myosin motor-like domain (MMD) (PubMed:15703213).</text>
</comment>
<comment type="induction">
    <text evidence="8">Expression is increased under low osmotic conditions (PubMed:12379226). An abaA response element (ARE) and two CCAAT sequences, to which the HAP complex binds, are found in the promoter region of csmA (PubMed:12379226). Moreover, consensus sequences that are recognized by Rlmp and Msn2/Msn4, transcription factors known to be involved in the response to osmotic stress, are also present in the promoter (PubMed:12379226).</text>
</comment>
<comment type="domain">
    <text evidence="7 9 15">The N-terminal myosin motor-like domain (MMD) does not seem to have motor activity but is indispensable for polarized cell wall synthesis via binding to actin that ensures the proper localization to the hyphal tips and septation sites near actin structures.</text>
</comment>
<comment type="disruption phenotype">
    <text evidence="7">Severely inhibits hyphal growth in the presence of chitin-binding reagent, Calcofluor white or Congo red (PubMed:10368147). Leads to morphological abnormalities in tip growth and septum formation (PubMed:10368147). Also results in proliferation of intracellular new hyphae, called intrahyphal hyphae (PubMed:10368147).</text>
</comment>
<comment type="similarity">
    <text evidence="13">In the N-terminal section; belongs to the TRAFAC class myosin-kinesin ATPase superfamily. Myosin family.</text>
</comment>
<comment type="similarity">
    <text evidence="13">In the C-terminal section; belongs to the chitin synthase family. Class V subfamily.</text>
</comment>
<evidence type="ECO:0000255" key="1"/>
<evidence type="ECO:0000255" key="2">
    <source>
        <dbReference type="PROSITE-ProRule" id="PRU00279"/>
    </source>
</evidence>
<evidence type="ECO:0000255" key="3">
    <source>
        <dbReference type="PROSITE-ProRule" id="PRU00498"/>
    </source>
</evidence>
<evidence type="ECO:0000255" key="4">
    <source>
        <dbReference type="PROSITE-ProRule" id="PRU00782"/>
    </source>
</evidence>
<evidence type="ECO:0000255" key="5">
    <source>
        <dbReference type="PROSITE-ProRule" id="PRU01342"/>
    </source>
</evidence>
<evidence type="ECO:0000256" key="6">
    <source>
        <dbReference type="SAM" id="MobiDB-lite"/>
    </source>
</evidence>
<evidence type="ECO:0000269" key="7">
    <source>
    </source>
</evidence>
<evidence type="ECO:0000269" key="8">
    <source>
    </source>
</evidence>
<evidence type="ECO:0000269" key="9">
    <source>
    </source>
</evidence>
<evidence type="ECO:0000269" key="10">
    <source>
    </source>
</evidence>
<evidence type="ECO:0000269" key="11">
    <source>
    </source>
</evidence>
<evidence type="ECO:0000303" key="12">
    <source>
    </source>
</evidence>
<evidence type="ECO:0000305" key="13"/>
<evidence type="ECO:0000305" key="14">
    <source>
    </source>
</evidence>
<evidence type="ECO:0000305" key="15">
    <source>
    </source>
</evidence>
<protein>
    <recommendedName>
        <fullName evidence="12">Chitin synthase csmA</fullName>
        <ecNumber evidence="14">2.4.1.16</ecNumber>
    </recommendedName>
    <alternativeName>
        <fullName evidence="13">Chitin-UDP acetyl-glucosaminyl transferase csmA</fullName>
    </alternativeName>
    <alternativeName>
        <fullName evidence="12">Class-V chitin synthase csmA</fullName>
    </alternativeName>
</protein>